<feature type="chain" id="PRO_1000198291" description="UPF0301 protein YqgE">
    <location>
        <begin position="1"/>
        <end position="187"/>
    </location>
</feature>
<name>YQGE_SALA4</name>
<comment type="similarity">
    <text evidence="1">Belongs to the UPF0301 (AlgH) family.</text>
</comment>
<evidence type="ECO:0000255" key="1">
    <source>
        <dbReference type="HAMAP-Rule" id="MF_00758"/>
    </source>
</evidence>
<reference key="1">
    <citation type="journal article" date="2011" name="J. Bacteriol.">
        <title>Comparative genomics of 28 Salmonella enterica isolates: evidence for CRISPR-mediated adaptive sublineage evolution.</title>
        <authorList>
            <person name="Fricke W.F."/>
            <person name="Mammel M.K."/>
            <person name="McDermott P.F."/>
            <person name="Tartera C."/>
            <person name="White D.G."/>
            <person name="Leclerc J.E."/>
            <person name="Ravel J."/>
            <person name="Cebula T.A."/>
        </authorList>
    </citation>
    <scope>NUCLEOTIDE SEQUENCE [LARGE SCALE GENOMIC DNA]</scope>
    <source>
        <strain>SL483</strain>
    </source>
</reference>
<protein>
    <recommendedName>
        <fullName evidence="1">UPF0301 protein YqgE</fullName>
    </recommendedName>
</protein>
<proteinExistence type="inferred from homology"/>
<organism>
    <name type="scientific">Salmonella agona (strain SL483)</name>
    <dbReference type="NCBI Taxonomy" id="454166"/>
    <lineage>
        <taxon>Bacteria</taxon>
        <taxon>Pseudomonadati</taxon>
        <taxon>Pseudomonadota</taxon>
        <taxon>Gammaproteobacteria</taxon>
        <taxon>Enterobacterales</taxon>
        <taxon>Enterobacteriaceae</taxon>
        <taxon>Salmonella</taxon>
    </lineage>
</organism>
<sequence>MNLQHHFLIAMPALQDPIFRRSVVYICEHNQDGAMGIIVNKPLENLQIEGILEKLKITPEPRDSSIRLDKAVMLGGPLAEDRGFILHTPPSRFASSIRISDNTVITTSRDVLETLGTQQQPSDVLVALGYASWDKGQLEQELLDNAWLTAPADLNILFKTPIAERWREAAKLIGIDILTMPGVAGHA</sequence>
<dbReference type="EMBL" id="CP001138">
    <property type="protein sequence ID" value="ACH50635.1"/>
    <property type="molecule type" value="Genomic_DNA"/>
</dbReference>
<dbReference type="RefSeq" id="WP_001053173.1">
    <property type="nucleotide sequence ID" value="NC_011149.1"/>
</dbReference>
<dbReference type="SMR" id="B5F5M1"/>
<dbReference type="KEGG" id="sea:SeAg_B3259"/>
<dbReference type="HOGENOM" id="CLU_057596_1_0_6"/>
<dbReference type="Proteomes" id="UP000008819">
    <property type="component" value="Chromosome"/>
</dbReference>
<dbReference type="GO" id="GO:0005829">
    <property type="term" value="C:cytosol"/>
    <property type="evidence" value="ECO:0007669"/>
    <property type="project" value="TreeGrafter"/>
</dbReference>
<dbReference type="FunFam" id="3.30.70.1300:FF:000001">
    <property type="entry name" value="UPF0301 protein YqgE"/>
    <property type="match status" value="1"/>
</dbReference>
<dbReference type="Gene3D" id="3.40.1740.10">
    <property type="entry name" value="VC0467-like"/>
    <property type="match status" value="1"/>
</dbReference>
<dbReference type="Gene3D" id="3.30.70.1300">
    <property type="entry name" value="VC0467-like domains"/>
    <property type="match status" value="1"/>
</dbReference>
<dbReference type="HAMAP" id="MF_00758">
    <property type="entry name" value="UPF0301"/>
    <property type="match status" value="1"/>
</dbReference>
<dbReference type="InterPro" id="IPR003774">
    <property type="entry name" value="AlgH-like"/>
</dbReference>
<dbReference type="NCBIfam" id="NF001266">
    <property type="entry name" value="PRK00228.1-1"/>
    <property type="match status" value="1"/>
</dbReference>
<dbReference type="PANTHER" id="PTHR30327">
    <property type="entry name" value="UNCHARACTERIZED PROTEIN YQGE"/>
    <property type="match status" value="1"/>
</dbReference>
<dbReference type="PANTHER" id="PTHR30327:SF1">
    <property type="entry name" value="UPF0301 PROTEIN YQGE"/>
    <property type="match status" value="1"/>
</dbReference>
<dbReference type="Pfam" id="PF02622">
    <property type="entry name" value="DUF179"/>
    <property type="match status" value="1"/>
</dbReference>
<dbReference type="SUPFAM" id="SSF143456">
    <property type="entry name" value="VC0467-like"/>
    <property type="match status" value="1"/>
</dbReference>
<gene>
    <name evidence="1" type="primary">yqgE</name>
    <name type="ordered locus">SeAg_B3259</name>
</gene>
<accession>B5F5M1</accession>